<feature type="chain" id="PRO_0000416207" description="7-carboxy-7-deazaguanine synthase">
    <location>
        <begin position="1"/>
        <end position="226"/>
    </location>
</feature>
<feature type="domain" description="Radical SAM core" evidence="2">
    <location>
        <begin position="16"/>
        <end position="221"/>
    </location>
</feature>
<feature type="binding site" evidence="1">
    <location>
        <begin position="10"/>
        <end position="12"/>
    </location>
    <ligand>
        <name>substrate</name>
    </ligand>
</feature>
<feature type="binding site" evidence="1">
    <location>
        <position position="25"/>
    </location>
    <ligand>
        <name>substrate</name>
    </ligand>
</feature>
<feature type="binding site" evidence="1">
    <location>
        <position position="29"/>
    </location>
    <ligand>
        <name>[4Fe-4S] cluster</name>
        <dbReference type="ChEBI" id="CHEBI:49883"/>
        <note>4Fe-4S-S-AdoMet</note>
    </ligand>
</feature>
<feature type="binding site" evidence="1">
    <location>
        <position position="33"/>
    </location>
    <ligand>
        <name>[4Fe-4S] cluster</name>
        <dbReference type="ChEBI" id="CHEBI:49883"/>
        <note>4Fe-4S-S-AdoMet</note>
    </ligand>
</feature>
<feature type="binding site" evidence="1">
    <location>
        <position position="36"/>
    </location>
    <ligand>
        <name>[4Fe-4S] cluster</name>
        <dbReference type="ChEBI" id="CHEBI:49883"/>
        <note>4Fe-4S-S-AdoMet</note>
    </ligand>
</feature>
<feature type="binding site" evidence="1">
    <location>
        <position position="38"/>
    </location>
    <ligand>
        <name>Mg(2+)</name>
        <dbReference type="ChEBI" id="CHEBI:18420"/>
    </ligand>
</feature>
<feature type="binding site" evidence="1">
    <location>
        <position position="69"/>
    </location>
    <ligand>
        <name>substrate</name>
    </ligand>
</feature>
<feature type="binding site" evidence="1">
    <location>
        <position position="71"/>
    </location>
    <ligand>
        <name>S-adenosyl-L-methionine</name>
        <dbReference type="ChEBI" id="CHEBI:59789"/>
    </ligand>
</feature>
<proteinExistence type="inferred from homology"/>
<keyword id="KW-0004">4Fe-4S</keyword>
<keyword id="KW-0408">Iron</keyword>
<keyword id="KW-0411">Iron-sulfur</keyword>
<keyword id="KW-0456">Lyase</keyword>
<keyword id="KW-0460">Magnesium</keyword>
<keyword id="KW-0479">Metal-binding</keyword>
<keyword id="KW-0671">Queuosine biosynthesis</keyword>
<keyword id="KW-1185">Reference proteome</keyword>
<keyword id="KW-0949">S-adenosyl-L-methionine</keyword>
<accession>Q1IHK7</accession>
<sequence>MQITEIYRSLQGESSYTGIPCIFVRLTACNLRCAWCDSEYTFKGGRKMSEDEIFAEVQKLAPGGLVEITGGEPLLQERELVPFMERLVASGYKVLIETSGERPLANVPQDVVKIVDVKCPASGEGGSFRIENLDALTPHDEIKFVISDRADYEFAREFTRQHGLENKVSSVIFSPAFRKDARGTRDASHCLVDPQDLANWVLEDQLDVRLGLQTHKFIWTPETKGV</sequence>
<evidence type="ECO:0000255" key="1">
    <source>
        <dbReference type="HAMAP-Rule" id="MF_00917"/>
    </source>
</evidence>
<evidence type="ECO:0000255" key="2">
    <source>
        <dbReference type="PROSITE-ProRule" id="PRU01266"/>
    </source>
</evidence>
<gene>
    <name evidence="1" type="primary">queE</name>
    <name type="ordered locus">Acid345_4643</name>
</gene>
<dbReference type="EC" id="4.3.99.3" evidence="1"/>
<dbReference type="EMBL" id="CP000360">
    <property type="protein sequence ID" value="ABF43643.1"/>
    <property type="molecule type" value="Genomic_DNA"/>
</dbReference>
<dbReference type="RefSeq" id="WP_011525440.1">
    <property type="nucleotide sequence ID" value="NC_008009.1"/>
</dbReference>
<dbReference type="SMR" id="Q1IHK7"/>
<dbReference type="STRING" id="204669.Acid345_4643"/>
<dbReference type="EnsemblBacteria" id="ABF43643">
    <property type="protein sequence ID" value="ABF43643"/>
    <property type="gene ID" value="Acid345_4643"/>
</dbReference>
<dbReference type="KEGG" id="aba:Acid345_4643"/>
<dbReference type="eggNOG" id="COG0602">
    <property type="taxonomic scope" value="Bacteria"/>
</dbReference>
<dbReference type="HOGENOM" id="CLU_066739_2_0_0"/>
<dbReference type="OrthoDB" id="9792276at2"/>
<dbReference type="UniPathway" id="UPA00391"/>
<dbReference type="Proteomes" id="UP000002432">
    <property type="component" value="Chromosome"/>
</dbReference>
<dbReference type="GO" id="GO:0051539">
    <property type="term" value="F:4 iron, 4 sulfur cluster binding"/>
    <property type="evidence" value="ECO:0007669"/>
    <property type="project" value="UniProtKB-UniRule"/>
</dbReference>
<dbReference type="GO" id="GO:0016840">
    <property type="term" value="F:carbon-nitrogen lyase activity"/>
    <property type="evidence" value="ECO:0007669"/>
    <property type="project" value="UniProtKB-UniRule"/>
</dbReference>
<dbReference type="GO" id="GO:0000287">
    <property type="term" value="F:magnesium ion binding"/>
    <property type="evidence" value="ECO:0007669"/>
    <property type="project" value="UniProtKB-UniRule"/>
</dbReference>
<dbReference type="GO" id="GO:1904047">
    <property type="term" value="F:S-adenosyl-L-methionine binding"/>
    <property type="evidence" value="ECO:0007669"/>
    <property type="project" value="UniProtKB-UniRule"/>
</dbReference>
<dbReference type="GO" id="GO:0008616">
    <property type="term" value="P:queuosine biosynthetic process"/>
    <property type="evidence" value="ECO:0007669"/>
    <property type="project" value="UniProtKB-UniRule"/>
</dbReference>
<dbReference type="CDD" id="cd01335">
    <property type="entry name" value="Radical_SAM"/>
    <property type="match status" value="1"/>
</dbReference>
<dbReference type="Gene3D" id="3.20.20.70">
    <property type="entry name" value="Aldolase class I"/>
    <property type="match status" value="1"/>
</dbReference>
<dbReference type="HAMAP" id="MF_00917">
    <property type="entry name" value="QueE"/>
    <property type="match status" value="1"/>
</dbReference>
<dbReference type="InterPro" id="IPR024924">
    <property type="entry name" value="7-CO-7-deazaguanine_synth-like"/>
</dbReference>
<dbReference type="InterPro" id="IPR013785">
    <property type="entry name" value="Aldolase_TIM"/>
</dbReference>
<dbReference type="InterPro" id="IPR007197">
    <property type="entry name" value="rSAM"/>
</dbReference>
<dbReference type="PANTHER" id="PTHR42836">
    <property type="entry name" value="7-CARBOXY-7-DEAZAGUANINE SYNTHASE"/>
    <property type="match status" value="1"/>
</dbReference>
<dbReference type="PANTHER" id="PTHR42836:SF1">
    <property type="entry name" value="7-CARBOXY-7-DEAZAGUANINE SYNTHASE"/>
    <property type="match status" value="1"/>
</dbReference>
<dbReference type="Pfam" id="PF13353">
    <property type="entry name" value="Fer4_12"/>
    <property type="match status" value="1"/>
</dbReference>
<dbReference type="Pfam" id="PF04055">
    <property type="entry name" value="Radical_SAM"/>
    <property type="match status" value="1"/>
</dbReference>
<dbReference type="PIRSF" id="PIRSF000370">
    <property type="entry name" value="QueE"/>
    <property type="match status" value="1"/>
</dbReference>
<dbReference type="SFLD" id="SFLDS00029">
    <property type="entry name" value="Radical_SAM"/>
    <property type="match status" value="1"/>
</dbReference>
<dbReference type="SUPFAM" id="SSF102114">
    <property type="entry name" value="Radical SAM enzymes"/>
    <property type="match status" value="1"/>
</dbReference>
<dbReference type="PROSITE" id="PS51918">
    <property type="entry name" value="RADICAL_SAM"/>
    <property type="match status" value="1"/>
</dbReference>
<organism>
    <name type="scientific">Koribacter versatilis (strain Ellin345)</name>
    <dbReference type="NCBI Taxonomy" id="204669"/>
    <lineage>
        <taxon>Bacteria</taxon>
        <taxon>Pseudomonadati</taxon>
        <taxon>Acidobacteriota</taxon>
        <taxon>Terriglobia</taxon>
        <taxon>Terriglobales</taxon>
        <taxon>Candidatus Korobacteraceae</taxon>
        <taxon>Candidatus Korobacter</taxon>
    </lineage>
</organism>
<reference key="1">
    <citation type="journal article" date="2009" name="Appl. Environ. Microbiol.">
        <title>Three genomes from the phylum Acidobacteria provide insight into the lifestyles of these microorganisms in soils.</title>
        <authorList>
            <person name="Ward N.L."/>
            <person name="Challacombe J.F."/>
            <person name="Janssen P.H."/>
            <person name="Henrissat B."/>
            <person name="Coutinho P.M."/>
            <person name="Wu M."/>
            <person name="Xie G."/>
            <person name="Haft D.H."/>
            <person name="Sait M."/>
            <person name="Badger J."/>
            <person name="Barabote R.D."/>
            <person name="Bradley B."/>
            <person name="Brettin T.S."/>
            <person name="Brinkac L.M."/>
            <person name="Bruce D."/>
            <person name="Creasy T."/>
            <person name="Daugherty S.C."/>
            <person name="Davidsen T.M."/>
            <person name="DeBoy R.T."/>
            <person name="Detter J.C."/>
            <person name="Dodson R.J."/>
            <person name="Durkin A.S."/>
            <person name="Ganapathy A."/>
            <person name="Gwinn-Giglio M."/>
            <person name="Han C.S."/>
            <person name="Khouri H."/>
            <person name="Kiss H."/>
            <person name="Kothari S.P."/>
            <person name="Madupu R."/>
            <person name="Nelson K.E."/>
            <person name="Nelson W.C."/>
            <person name="Paulsen I."/>
            <person name="Penn K."/>
            <person name="Ren Q."/>
            <person name="Rosovitz M.J."/>
            <person name="Selengut J.D."/>
            <person name="Shrivastava S."/>
            <person name="Sullivan S.A."/>
            <person name="Tapia R."/>
            <person name="Thompson L.S."/>
            <person name="Watkins K.L."/>
            <person name="Yang Q."/>
            <person name="Yu C."/>
            <person name="Zafar N."/>
            <person name="Zhou L."/>
            <person name="Kuske C.R."/>
        </authorList>
    </citation>
    <scope>NUCLEOTIDE SEQUENCE [LARGE SCALE GENOMIC DNA]</scope>
    <source>
        <strain>Ellin345</strain>
    </source>
</reference>
<name>QUEE_KORVE</name>
<comment type="function">
    <text evidence="1">Catalyzes the complex heterocyclic radical-mediated conversion of 6-carboxy-5,6,7,8-tetrahydropterin (CPH4) to 7-carboxy-7-deazaguanine (CDG), a step common to the biosynthetic pathways of all 7-deazapurine-containing compounds.</text>
</comment>
<comment type="catalytic activity">
    <reaction evidence="1">
        <text>6-carboxy-5,6,7,8-tetrahydropterin + H(+) = 7-carboxy-7-deazaguanine + NH4(+)</text>
        <dbReference type="Rhea" id="RHEA:27974"/>
        <dbReference type="ChEBI" id="CHEBI:15378"/>
        <dbReference type="ChEBI" id="CHEBI:28938"/>
        <dbReference type="ChEBI" id="CHEBI:61032"/>
        <dbReference type="ChEBI" id="CHEBI:61036"/>
        <dbReference type="EC" id="4.3.99.3"/>
    </reaction>
</comment>
<comment type="cofactor">
    <cofactor evidence="1">
        <name>[4Fe-4S] cluster</name>
        <dbReference type="ChEBI" id="CHEBI:49883"/>
    </cofactor>
    <text evidence="1">Binds 1 [4Fe-4S] cluster. The cluster is coordinated with 3 cysteines and an exchangeable S-adenosyl-L-methionine.</text>
</comment>
<comment type="cofactor">
    <cofactor evidence="1">
        <name>S-adenosyl-L-methionine</name>
        <dbReference type="ChEBI" id="CHEBI:59789"/>
    </cofactor>
    <text evidence="1">Binds 1 S-adenosyl-L-methionine per subunit.</text>
</comment>
<comment type="cofactor">
    <cofactor evidence="1">
        <name>Mg(2+)</name>
        <dbReference type="ChEBI" id="CHEBI:18420"/>
    </cofactor>
</comment>
<comment type="pathway">
    <text evidence="1">Purine metabolism; 7-cyano-7-deazaguanine biosynthesis.</text>
</comment>
<comment type="subunit">
    <text evidence="1">Homodimer.</text>
</comment>
<comment type="similarity">
    <text evidence="1">Belongs to the radical SAM superfamily. 7-carboxy-7-deazaguanine synthase family.</text>
</comment>
<protein>
    <recommendedName>
        <fullName evidence="1">7-carboxy-7-deazaguanine synthase</fullName>
        <shortName evidence="1">CDG synthase</shortName>
        <ecNumber evidence="1">4.3.99.3</ecNumber>
    </recommendedName>
    <alternativeName>
        <fullName evidence="1">Queuosine biosynthesis protein QueE</fullName>
    </alternativeName>
</protein>